<name>YL770_MIMIV</name>
<sequence>MKEAVKNVKPKVPAKKRIITGSKTKKKVFVKKKPPDKKPLKKPVKKTVKTYKLKSIYVSNKDLKMSKWIPTPKKEFTEIETNSWYEHRKFENPNGSPIQSYNKIVPVVPPESIKQQNLANKRKKTNRPIVFISSEKIRIYPTKEQQKILQTWFRLFACMYNSSIDYINSKKVVLESGRINVAATRKVCNKISVRKALKTIRDNLIKSTNPSIMTHIMDEAIGLACSNYKTCLTNYIEGQIKKFDIKPWSISKRRKIIVIEPGYFKGNSFCPTVFPKMKSSKPLIMIDKTVTLQYDSDTRKYILFVPRVTPKYSVNKEKNSCGIDPGLRDFLTVYSENETQSICPIEIVVNTTKNEYKKIDKINEIIKTKPNLNSKRKKKLNRGLRKYHRRVTNKMKDMHYKVSHELVNTFDKICIGKLNVKSILSKANTVLKSALKRKLATLSFYRFTQRLTHMGYKYGTEVVNVNEYLTTKTCSNCGKIKDLGASKIYECESCGMYADRDENAAKNILKVGLKPWYKQK</sequence>
<gene>
    <name type="ordered locus">MIMI_L770</name>
</gene>
<reference key="1">
    <citation type="journal article" date="2004" name="Science">
        <title>The 1.2-megabase genome sequence of Mimivirus.</title>
        <authorList>
            <person name="Raoult D."/>
            <person name="Audic S."/>
            <person name="Robert C."/>
            <person name="Abergel C."/>
            <person name="Renesto P."/>
            <person name="Ogata H."/>
            <person name="La Scola B."/>
            <person name="Susan M."/>
            <person name="Claverie J.-M."/>
        </authorList>
    </citation>
    <scope>NUCLEOTIDE SEQUENCE [LARGE SCALE GENOMIC DNA]</scope>
    <source>
        <strain>Rowbotham-Bradford</strain>
    </source>
</reference>
<organism>
    <name type="scientific">Acanthamoeba polyphaga mimivirus</name>
    <name type="common">APMV</name>
    <dbReference type="NCBI Taxonomy" id="212035"/>
    <lineage>
        <taxon>Viruses</taxon>
        <taxon>Varidnaviria</taxon>
        <taxon>Bamfordvirae</taxon>
        <taxon>Nucleocytoviricota</taxon>
        <taxon>Megaviricetes</taxon>
        <taxon>Imitervirales</taxon>
        <taxon>Mimiviridae</taxon>
        <taxon>Megamimivirinae</taxon>
        <taxon>Mimivirus</taxon>
        <taxon>Mimivirus bradfordmassiliense</taxon>
    </lineage>
</organism>
<accession>Q5UPQ8</accession>
<dbReference type="EMBL" id="AY653733">
    <property type="protein sequence ID" value="AAV51030.1"/>
    <property type="molecule type" value="Genomic_DNA"/>
</dbReference>
<dbReference type="SMR" id="Q5UPQ8"/>
<dbReference type="KEGG" id="vg:9925429"/>
<dbReference type="OrthoDB" id="3397at10239"/>
<dbReference type="Proteomes" id="UP000001134">
    <property type="component" value="Genome"/>
</dbReference>
<dbReference type="GO" id="GO:0003677">
    <property type="term" value="F:DNA binding"/>
    <property type="evidence" value="ECO:0007669"/>
    <property type="project" value="UniProtKB-KW"/>
</dbReference>
<dbReference type="GO" id="GO:0046872">
    <property type="term" value="F:metal ion binding"/>
    <property type="evidence" value="ECO:0007669"/>
    <property type="project" value="UniProtKB-KW"/>
</dbReference>
<dbReference type="GO" id="GO:0006310">
    <property type="term" value="P:DNA recombination"/>
    <property type="evidence" value="ECO:0007669"/>
    <property type="project" value="UniProtKB-KW"/>
</dbReference>
<dbReference type="GO" id="GO:0032196">
    <property type="term" value="P:transposition"/>
    <property type="evidence" value="ECO:0007669"/>
    <property type="project" value="UniProtKB-KW"/>
</dbReference>
<dbReference type="InterPro" id="IPR010095">
    <property type="entry name" value="Cas12f1-like_TNB"/>
</dbReference>
<dbReference type="InterPro" id="IPR051491">
    <property type="entry name" value="Recombinase/Transposase-rel"/>
</dbReference>
<dbReference type="InterPro" id="IPR001959">
    <property type="entry name" value="Transposase"/>
</dbReference>
<dbReference type="InterPro" id="IPR021027">
    <property type="entry name" value="Transposase_put_HTH"/>
</dbReference>
<dbReference type="NCBIfam" id="NF040570">
    <property type="entry name" value="guided_TnpB"/>
    <property type="match status" value="1"/>
</dbReference>
<dbReference type="NCBIfam" id="TIGR01766">
    <property type="entry name" value="IS200/IS605 family accessory protein TnpB-like domain"/>
    <property type="match status" value="1"/>
</dbReference>
<dbReference type="PANTHER" id="PTHR36172">
    <property type="match status" value="1"/>
</dbReference>
<dbReference type="PANTHER" id="PTHR36172:SF1">
    <property type="entry name" value="RESOLVASE-RELATED"/>
    <property type="match status" value="1"/>
</dbReference>
<dbReference type="Pfam" id="PF07282">
    <property type="entry name" value="Cas12f1-like_TNB"/>
    <property type="match status" value="1"/>
</dbReference>
<dbReference type="Pfam" id="PF12323">
    <property type="entry name" value="HTH_OrfB_IS605"/>
    <property type="match status" value="1"/>
</dbReference>
<dbReference type="Pfam" id="PF01385">
    <property type="entry name" value="OrfB_IS605"/>
    <property type="match status" value="1"/>
</dbReference>
<proteinExistence type="inferred from homology"/>
<feature type="chain" id="PRO_0000075541" description="TnpB-like protein L770">
    <location>
        <begin position="1"/>
        <end position="520"/>
    </location>
</feature>
<feature type="region of interest" description="Disordered" evidence="2">
    <location>
        <begin position="23"/>
        <end position="44"/>
    </location>
</feature>
<feature type="binding site" evidence="1">
    <location>
        <position position="474"/>
    </location>
    <ligand>
        <name>Zn(2+)</name>
        <dbReference type="ChEBI" id="CHEBI:29105"/>
    </ligand>
</feature>
<feature type="binding site" evidence="1">
    <location>
        <position position="477"/>
    </location>
    <ligand>
        <name>Zn(2+)</name>
        <dbReference type="ChEBI" id="CHEBI:29105"/>
    </ligand>
</feature>
<feature type="binding site" evidence="1">
    <location>
        <position position="491"/>
    </location>
    <ligand>
        <name>Zn(2+)</name>
        <dbReference type="ChEBI" id="CHEBI:29105"/>
    </ligand>
</feature>
<feature type="binding site" evidence="1">
    <location>
        <position position="494"/>
    </location>
    <ligand>
        <name>Zn(2+)</name>
        <dbReference type="ChEBI" id="CHEBI:29105"/>
    </ligand>
</feature>
<protein>
    <recommendedName>
        <fullName>TnpB-like protein L770</fullName>
    </recommendedName>
</protein>
<organismHost>
    <name type="scientific">Acanthamoeba polyphaga</name>
    <name type="common">Amoeba</name>
    <dbReference type="NCBI Taxonomy" id="5757"/>
</organismHost>
<comment type="similarity">
    <text evidence="3">In the central section; belongs to the transposase 2 family.</text>
</comment>
<comment type="similarity">
    <text evidence="3">In the C-terminal section; belongs to the transposase 35 family.</text>
</comment>
<keyword id="KW-0233">DNA recombination</keyword>
<keyword id="KW-0238">DNA-binding</keyword>
<keyword id="KW-0479">Metal-binding</keyword>
<keyword id="KW-1185">Reference proteome</keyword>
<keyword id="KW-0815">Transposition</keyword>
<keyword id="KW-0862">Zinc</keyword>
<evidence type="ECO:0000250" key="1">
    <source>
        <dbReference type="UniProtKB" id="Q7DF80"/>
    </source>
</evidence>
<evidence type="ECO:0000256" key="2">
    <source>
        <dbReference type="SAM" id="MobiDB-lite"/>
    </source>
</evidence>
<evidence type="ECO:0000305" key="3"/>